<organism>
    <name type="scientific">Prochlorococcus marinus (strain MIT 9215)</name>
    <dbReference type="NCBI Taxonomy" id="93060"/>
    <lineage>
        <taxon>Bacteria</taxon>
        <taxon>Bacillati</taxon>
        <taxon>Cyanobacteriota</taxon>
        <taxon>Cyanophyceae</taxon>
        <taxon>Synechococcales</taxon>
        <taxon>Prochlorococcaceae</taxon>
        <taxon>Prochlorococcus</taxon>
    </lineage>
</organism>
<name>QUEA_PROM2</name>
<reference key="1">
    <citation type="journal article" date="2007" name="PLoS Genet.">
        <title>Patterns and implications of gene gain and loss in the evolution of Prochlorococcus.</title>
        <authorList>
            <person name="Kettler G.C."/>
            <person name="Martiny A.C."/>
            <person name="Huang K."/>
            <person name="Zucker J."/>
            <person name="Coleman M.L."/>
            <person name="Rodrigue S."/>
            <person name="Chen F."/>
            <person name="Lapidus A."/>
            <person name="Ferriera S."/>
            <person name="Johnson J."/>
            <person name="Steglich C."/>
            <person name="Church G.M."/>
            <person name="Richardson P."/>
            <person name="Chisholm S.W."/>
        </authorList>
    </citation>
    <scope>NUCLEOTIDE SEQUENCE [LARGE SCALE GENOMIC DNA]</scope>
    <source>
        <strain>MIT 9215</strain>
    </source>
</reference>
<proteinExistence type="inferred from homology"/>
<comment type="function">
    <text evidence="1">Transfers and isomerizes the ribose moiety from AdoMet to the 7-aminomethyl group of 7-deazaguanine (preQ1-tRNA) to give epoxyqueuosine (oQ-tRNA).</text>
</comment>
<comment type="catalytic activity">
    <reaction evidence="1">
        <text>7-aminomethyl-7-carbaguanosine(34) in tRNA + S-adenosyl-L-methionine = epoxyqueuosine(34) in tRNA + adenine + L-methionine + 2 H(+)</text>
        <dbReference type="Rhea" id="RHEA:32155"/>
        <dbReference type="Rhea" id="RHEA-COMP:10342"/>
        <dbReference type="Rhea" id="RHEA-COMP:18582"/>
        <dbReference type="ChEBI" id="CHEBI:15378"/>
        <dbReference type="ChEBI" id="CHEBI:16708"/>
        <dbReference type="ChEBI" id="CHEBI:57844"/>
        <dbReference type="ChEBI" id="CHEBI:59789"/>
        <dbReference type="ChEBI" id="CHEBI:82833"/>
        <dbReference type="ChEBI" id="CHEBI:194443"/>
        <dbReference type="EC" id="2.4.99.17"/>
    </reaction>
</comment>
<comment type="pathway">
    <text evidence="1">tRNA modification; tRNA-queuosine biosynthesis.</text>
</comment>
<comment type="subunit">
    <text evidence="1">Monomer.</text>
</comment>
<comment type="subcellular location">
    <subcellularLocation>
        <location evidence="1">Cytoplasm</location>
    </subcellularLocation>
</comment>
<comment type="similarity">
    <text evidence="1">Belongs to the QueA family.</text>
</comment>
<evidence type="ECO:0000255" key="1">
    <source>
        <dbReference type="HAMAP-Rule" id="MF_00113"/>
    </source>
</evidence>
<sequence length="374" mass="42717">MISQINNKGRDNKLEAYDYFLDPSLIASKPCAIRHESRLMIVRNSVLEENCLTNKFTKNLLDEFRKGDLLVVNNTKVMKARLKVQLENRTLVELLVLERSHECVWLCLAKPAKKLKINRKIILKSPYAQDINLMVDGVDEETGGRFIKFPENITDLNSMNDLLNKYGEIPLPPYIKNSEEESFHEKSYQTEYATNPGAVAAPTAGLHLSKSLISNLKKKGVIILPITLHVGYGTFKPIDQEDLSNLKLHKEWVSVNEEVVEEIKRIKKTDRKIIAIGTTSVRALESCYSHEINDYVPIAKYVDLVIKPGYKFKVVDGLLTNFHLPKSSLLLLVSAMIGRERLLDLYKKAIKEKFRFFSYGDAMYISPDSLLEKK</sequence>
<dbReference type="EC" id="2.4.99.17" evidence="1"/>
<dbReference type="EMBL" id="CP000825">
    <property type="protein sequence ID" value="ABV50098.1"/>
    <property type="molecule type" value="Genomic_DNA"/>
</dbReference>
<dbReference type="RefSeq" id="WP_012007237.1">
    <property type="nucleotide sequence ID" value="NC_009840.1"/>
</dbReference>
<dbReference type="SMR" id="A8G3B7"/>
<dbReference type="STRING" id="93060.P9215_04821"/>
<dbReference type="KEGG" id="pmh:P9215_04821"/>
<dbReference type="eggNOG" id="COG0809">
    <property type="taxonomic scope" value="Bacteria"/>
</dbReference>
<dbReference type="HOGENOM" id="CLU_039110_1_0_3"/>
<dbReference type="OrthoDB" id="9805933at2"/>
<dbReference type="UniPathway" id="UPA00392"/>
<dbReference type="Proteomes" id="UP000002014">
    <property type="component" value="Chromosome"/>
</dbReference>
<dbReference type="GO" id="GO:0005737">
    <property type="term" value="C:cytoplasm"/>
    <property type="evidence" value="ECO:0007669"/>
    <property type="project" value="UniProtKB-SubCell"/>
</dbReference>
<dbReference type="GO" id="GO:0051075">
    <property type="term" value="F:S-adenosylmethionine:tRNA ribosyltransferase-isomerase activity"/>
    <property type="evidence" value="ECO:0007669"/>
    <property type="project" value="UniProtKB-EC"/>
</dbReference>
<dbReference type="GO" id="GO:0008616">
    <property type="term" value="P:queuosine biosynthetic process"/>
    <property type="evidence" value="ECO:0007669"/>
    <property type="project" value="UniProtKB-UniRule"/>
</dbReference>
<dbReference type="GO" id="GO:0002099">
    <property type="term" value="P:tRNA wobble guanine modification"/>
    <property type="evidence" value="ECO:0007669"/>
    <property type="project" value="TreeGrafter"/>
</dbReference>
<dbReference type="Gene3D" id="2.40.10.240">
    <property type="entry name" value="QueA-like"/>
    <property type="match status" value="1"/>
</dbReference>
<dbReference type="Gene3D" id="3.40.1780.10">
    <property type="entry name" value="QueA-like"/>
    <property type="match status" value="1"/>
</dbReference>
<dbReference type="HAMAP" id="MF_00113">
    <property type="entry name" value="QueA"/>
    <property type="match status" value="1"/>
</dbReference>
<dbReference type="InterPro" id="IPR003699">
    <property type="entry name" value="QueA"/>
</dbReference>
<dbReference type="InterPro" id="IPR042118">
    <property type="entry name" value="QueA_dom1"/>
</dbReference>
<dbReference type="InterPro" id="IPR042119">
    <property type="entry name" value="QueA_dom2"/>
</dbReference>
<dbReference type="InterPro" id="IPR036100">
    <property type="entry name" value="QueA_sf"/>
</dbReference>
<dbReference type="NCBIfam" id="NF001140">
    <property type="entry name" value="PRK00147.1"/>
    <property type="match status" value="1"/>
</dbReference>
<dbReference type="NCBIfam" id="TIGR00113">
    <property type="entry name" value="queA"/>
    <property type="match status" value="1"/>
</dbReference>
<dbReference type="PANTHER" id="PTHR30307">
    <property type="entry name" value="S-ADENOSYLMETHIONINE:TRNA RIBOSYLTRANSFERASE-ISOMERASE"/>
    <property type="match status" value="1"/>
</dbReference>
<dbReference type="PANTHER" id="PTHR30307:SF0">
    <property type="entry name" value="S-ADENOSYLMETHIONINE:TRNA RIBOSYLTRANSFERASE-ISOMERASE"/>
    <property type="match status" value="1"/>
</dbReference>
<dbReference type="Pfam" id="PF02547">
    <property type="entry name" value="Queuosine_synth"/>
    <property type="match status" value="1"/>
</dbReference>
<dbReference type="SUPFAM" id="SSF111337">
    <property type="entry name" value="QueA-like"/>
    <property type="match status" value="1"/>
</dbReference>
<gene>
    <name evidence="1" type="primary">queA</name>
    <name type="ordered locus">P9215_04821</name>
</gene>
<keyword id="KW-0963">Cytoplasm</keyword>
<keyword id="KW-0671">Queuosine biosynthesis</keyword>
<keyword id="KW-0949">S-adenosyl-L-methionine</keyword>
<keyword id="KW-0808">Transferase</keyword>
<feature type="chain" id="PRO_1000094798" description="S-adenosylmethionine:tRNA ribosyltransferase-isomerase">
    <location>
        <begin position="1"/>
        <end position="374"/>
    </location>
</feature>
<protein>
    <recommendedName>
        <fullName evidence="1">S-adenosylmethionine:tRNA ribosyltransferase-isomerase</fullName>
        <ecNumber evidence="1">2.4.99.17</ecNumber>
    </recommendedName>
    <alternativeName>
        <fullName evidence="1">Queuosine biosynthesis protein QueA</fullName>
    </alternativeName>
</protein>
<accession>A8G3B7</accession>